<organism>
    <name type="scientific">Bacteroides fragilis (strain ATCC 25285 / DSM 2151 / CCUG 4856 / JCM 11019 / LMG 10263 / NCTC 9343 / Onslow / VPI 2553 / EN-2)</name>
    <dbReference type="NCBI Taxonomy" id="272559"/>
    <lineage>
        <taxon>Bacteria</taxon>
        <taxon>Pseudomonadati</taxon>
        <taxon>Bacteroidota</taxon>
        <taxon>Bacteroidia</taxon>
        <taxon>Bacteroidales</taxon>
        <taxon>Bacteroidaceae</taxon>
        <taxon>Bacteroides</taxon>
    </lineage>
</organism>
<reference key="1">
    <citation type="journal article" date="2005" name="Science">
        <title>Extensive DNA inversions in the B. fragilis genome control variable gene expression.</title>
        <authorList>
            <person name="Cerdeno-Tarraga A.-M."/>
            <person name="Patrick S."/>
            <person name="Crossman L.C."/>
            <person name="Blakely G."/>
            <person name="Abratt V."/>
            <person name="Lennard N."/>
            <person name="Poxton I."/>
            <person name="Duerden B."/>
            <person name="Harris B."/>
            <person name="Quail M.A."/>
            <person name="Barron A."/>
            <person name="Clark L."/>
            <person name="Corton C."/>
            <person name="Doggett J."/>
            <person name="Holden M.T.G."/>
            <person name="Larke N."/>
            <person name="Line A."/>
            <person name="Lord A."/>
            <person name="Norbertczak H."/>
            <person name="Ormond D."/>
            <person name="Price C."/>
            <person name="Rabbinowitsch E."/>
            <person name="Woodward J."/>
            <person name="Barrell B.G."/>
            <person name="Parkhill J."/>
        </authorList>
    </citation>
    <scope>NUCLEOTIDE SEQUENCE [LARGE SCALE GENOMIC DNA]</scope>
    <source>
        <strain>ATCC 25285 / DSM 2151 / CCUG 4856 / JCM 11019 / LMG 10263 / NCTC 9343 / Onslow / VPI 2553 / EN-2</strain>
    </source>
</reference>
<accession>Q5LG80</accession>
<proteinExistence type="inferred from homology"/>
<sequence>MNQDTICAIATAQGGAIGSIRVSGPEAITITGRIFTPAKSGKLLSEQKPYTLTFGRIYNGEEMIDEVLVSLFRAPHSYTGEDSTEITCHGSSYILQQVMQLLIKNGCRMAQPGEYTQRAFLNGKMDLSQAEAVADLIASSSAATHRLALSQMRGGFSKELTTLREKLLNFTSMIELELDFSEEDVEFADRSALRRLADEIEEVIARLANSFSVGNVIKNGVPVAIIGETNAGKSTLLNVLLNEDKAIVSDIHGTTRDVIEDTVNIGGITFRFIDTAGIRETSDTIESLGIERTFQKLDQAEIVLWMIDSADAISQLTLLSDKILPRCEHKQLILVFNKVELINETQKNELASQFSEHIGSEIESIFISAKQRLHTDELQQRLVAAAHLPTVTQNDVIVTNVRHYEALTRALDAIHRVQEGLDANISGDFLSQDIRECIFHLSDIAGEVTNDMVLQNIFAHFCIGK</sequence>
<keyword id="KW-0963">Cytoplasm</keyword>
<keyword id="KW-0342">GTP-binding</keyword>
<keyword id="KW-0378">Hydrolase</keyword>
<keyword id="KW-0460">Magnesium</keyword>
<keyword id="KW-0479">Metal-binding</keyword>
<keyword id="KW-0547">Nucleotide-binding</keyword>
<keyword id="KW-0630">Potassium</keyword>
<keyword id="KW-0819">tRNA processing</keyword>
<protein>
    <recommendedName>
        <fullName evidence="1">tRNA modification GTPase MnmE</fullName>
        <ecNumber evidence="1">3.6.-.-</ecNumber>
    </recommendedName>
</protein>
<comment type="function">
    <text evidence="1">Exhibits a very high intrinsic GTPase hydrolysis rate. Involved in the addition of a carboxymethylaminomethyl (cmnm) group at the wobble position (U34) of certain tRNAs, forming tRNA-cmnm(5)s(2)U34.</text>
</comment>
<comment type="cofactor">
    <cofactor evidence="1">
        <name>K(+)</name>
        <dbReference type="ChEBI" id="CHEBI:29103"/>
    </cofactor>
    <text evidence="1">Binds 1 potassium ion per subunit.</text>
</comment>
<comment type="subunit">
    <text evidence="1">Homodimer. Heterotetramer of two MnmE and two MnmG subunits.</text>
</comment>
<comment type="subcellular location">
    <subcellularLocation>
        <location evidence="1">Cytoplasm</location>
    </subcellularLocation>
</comment>
<comment type="similarity">
    <text evidence="1">Belongs to the TRAFAC class TrmE-Era-EngA-EngB-Septin-like GTPase superfamily. TrmE GTPase family.</text>
</comment>
<dbReference type="EC" id="3.6.-.-" evidence="1"/>
<dbReference type="EMBL" id="CR626927">
    <property type="protein sequence ID" value="CAH06861.1"/>
    <property type="molecule type" value="Genomic_DNA"/>
</dbReference>
<dbReference type="RefSeq" id="WP_010992346.1">
    <property type="nucleotide sequence ID" value="NZ_UFTH01000001.1"/>
</dbReference>
<dbReference type="SMR" id="Q5LG80"/>
<dbReference type="PaxDb" id="272559-BF9343_1080"/>
<dbReference type="GeneID" id="60367851"/>
<dbReference type="KEGG" id="bfs:BF9343_1080"/>
<dbReference type="eggNOG" id="COG0486">
    <property type="taxonomic scope" value="Bacteria"/>
</dbReference>
<dbReference type="HOGENOM" id="CLU_019624_4_1_10"/>
<dbReference type="Proteomes" id="UP000006731">
    <property type="component" value="Chromosome"/>
</dbReference>
<dbReference type="GO" id="GO:0005829">
    <property type="term" value="C:cytosol"/>
    <property type="evidence" value="ECO:0007669"/>
    <property type="project" value="TreeGrafter"/>
</dbReference>
<dbReference type="GO" id="GO:0005525">
    <property type="term" value="F:GTP binding"/>
    <property type="evidence" value="ECO:0007669"/>
    <property type="project" value="UniProtKB-UniRule"/>
</dbReference>
<dbReference type="GO" id="GO:0003924">
    <property type="term" value="F:GTPase activity"/>
    <property type="evidence" value="ECO:0007669"/>
    <property type="project" value="UniProtKB-UniRule"/>
</dbReference>
<dbReference type="GO" id="GO:0046872">
    <property type="term" value="F:metal ion binding"/>
    <property type="evidence" value="ECO:0007669"/>
    <property type="project" value="UniProtKB-KW"/>
</dbReference>
<dbReference type="GO" id="GO:0030488">
    <property type="term" value="P:tRNA methylation"/>
    <property type="evidence" value="ECO:0007669"/>
    <property type="project" value="TreeGrafter"/>
</dbReference>
<dbReference type="GO" id="GO:0002098">
    <property type="term" value="P:tRNA wobble uridine modification"/>
    <property type="evidence" value="ECO:0007669"/>
    <property type="project" value="TreeGrafter"/>
</dbReference>
<dbReference type="CDD" id="cd04164">
    <property type="entry name" value="trmE"/>
    <property type="match status" value="1"/>
</dbReference>
<dbReference type="CDD" id="cd14858">
    <property type="entry name" value="TrmE_N"/>
    <property type="match status" value="1"/>
</dbReference>
<dbReference type="FunFam" id="3.30.1360.120:FF:000003">
    <property type="entry name" value="tRNA modification GTPase MnmE"/>
    <property type="match status" value="1"/>
</dbReference>
<dbReference type="FunFam" id="3.40.50.300:FF:001376">
    <property type="entry name" value="tRNA modification GTPase MnmE"/>
    <property type="match status" value="1"/>
</dbReference>
<dbReference type="Gene3D" id="3.40.50.300">
    <property type="entry name" value="P-loop containing nucleotide triphosphate hydrolases"/>
    <property type="match status" value="1"/>
</dbReference>
<dbReference type="Gene3D" id="3.30.1360.120">
    <property type="entry name" value="Probable tRNA modification gtpase trme, domain 1"/>
    <property type="match status" value="1"/>
</dbReference>
<dbReference type="Gene3D" id="1.20.120.430">
    <property type="entry name" value="tRNA modification GTPase MnmE domain 2"/>
    <property type="match status" value="1"/>
</dbReference>
<dbReference type="HAMAP" id="MF_00379">
    <property type="entry name" value="GTPase_MnmE"/>
    <property type="match status" value="1"/>
</dbReference>
<dbReference type="InterPro" id="IPR031168">
    <property type="entry name" value="G_TrmE"/>
</dbReference>
<dbReference type="InterPro" id="IPR006073">
    <property type="entry name" value="GTP-bd"/>
</dbReference>
<dbReference type="InterPro" id="IPR018948">
    <property type="entry name" value="GTP-bd_TrmE_N"/>
</dbReference>
<dbReference type="InterPro" id="IPR004520">
    <property type="entry name" value="GTPase_MnmE"/>
</dbReference>
<dbReference type="InterPro" id="IPR027368">
    <property type="entry name" value="MnmE_dom2"/>
</dbReference>
<dbReference type="InterPro" id="IPR025867">
    <property type="entry name" value="MnmE_helical"/>
</dbReference>
<dbReference type="InterPro" id="IPR027417">
    <property type="entry name" value="P-loop_NTPase"/>
</dbReference>
<dbReference type="InterPro" id="IPR005225">
    <property type="entry name" value="Small_GTP-bd"/>
</dbReference>
<dbReference type="InterPro" id="IPR027266">
    <property type="entry name" value="TrmE/GcvT_dom1"/>
</dbReference>
<dbReference type="NCBIfam" id="TIGR00450">
    <property type="entry name" value="mnmE_trmE_thdF"/>
    <property type="match status" value="1"/>
</dbReference>
<dbReference type="NCBIfam" id="TIGR00231">
    <property type="entry name" value="small_GTP"/>
    <property type="match status" value="1"/>
</dbReference>
<dbReference type="PANTHER" id="PTHR42714">
    <property type="entry name" value="TRNA MODIFICATION GTPASE GTPBP3"/>
    <property type="match status" value="1"/>
</dbReference>
<dbReference type="PANTHER" id="PTHR42714:SF2">
    <property type="entry name" value="TRNA MODIFICATION GTPASE GTPBP3, MITOCHONDRIAL"/>
    <property type="match status" value="1"/>
</dbReference>
<dbReference type="Pfam" id="PF01926">
    <property type="entry name" value="MMR_HSR1"/>
    <property type="match status" value="1"/>
</dbReference>
<dbReference type="Pfam" id="PF12631">
    <property type="entry name" value="MnmE_helical"/>
    <property type="match status" value="1"/>
</dbReference>
<dbReference type="Pfam" id="PF10396">
    <property type="entry name" value="TrmE_N"/>
    <property type="match status" value="1"/>
</dbReference>
<dbReference type="SUPFAM" id="SSF52540">
    <property type="entry name" value="P-loop containing nucleoside triphosphate hydrolases"/>
    <property type="match status" value="1"/>
</dbReference>
<dbReference type="PROSITE" id="PS51709">
    <property type="entry name" value="G_TRME"/>
    <property type="match status" value="1"/>
</dbReference>
<gene>
    <name evidence="1" type="primary">mnmE</name>
    <name evidence="1" type="synonym">trmE</name>
    <name type="ordered locus">BF1138</name>
</gene>
<feature type="chain" id="PRO_1000048800" description="tRNA modification GTPase MnmE">
    <location>
        <begin position="1"/>
        <end position="465"/>
    </location>
</feature>
<feature type="domain" description="TrmE-type G">
    <location>
        <begin position="220"/>
        <end position="387"/>
    </location>
</feature>
<feature type="binding site" evidence="1">
    <location>
        <position position="21"/>
    </location>
    <ligand>
        <name>(6S)-5-formyl-5,6,7,8-tetrahydrofolate</name>
        <dbReference type="ChEBI" id="CHEBI:57457"/>
    </ligand>
</feature>
<feature type="binding site" evidence="1">
    <location>
        <position position="85"/>
    </location>
    <ligand>
        <name>(6S)-5-formyl-5,6,7,8-tetrahydrofolate</name>
        <dbReference type="ChEBI" id="CHEBI:57457"/>
    </ligand>
</feature>
<feature type="binding site" evidence="1">
    <location>
        <position position="124"/>
    </location>
    <ligand>
        <name>(6S)-5-formyl-5,6,7,8-tetrahydrofolate</name>
        <dbReference type="ChEBI" id="CHEBI:57457"/>
    </ligand>
</feature>
<feature type="binding site" evidence="1">
    <location>
        <begin position="230"/>
        <end position="235"/>
    </location>
    <ligand>
        <name>GTP</name>
        <dbReference type="ChEBI" id="CHEBI:37565"/>
    </ligand>
</feature>
<feature type="binding site" evidence="1">
    <location>
        <position position="230"/>
    </location>
    <ligand>
        <name>K(+)</name>
        <dbReference type="ChEBI" id="CHEBI:29103"/>
    </ligand>
</feature>
<feature type="binding site" evidence="1">
    <location>
        <position position="234"/>
    </location>
    <ligand>
        <name>Mg(2+)</name>
        <dbReference type="ChEBI" id="CHEBI:18420"/>
    </ligand>
</feature>
<feature type="binding site" evidence="1">
    <location>
        <begin position="249"/>
        <end position="255"/>
    </location>
    <ligand>
        <name>GTP</name>
        <dbReference type="ChEBI" id="CHEBI:37565"/>
    </ligand>
</feature>
<feature type="binding site" evidence="1">
    <location>
        <position position="249"/>
    </location>
    <ligand>
        <name>K(+)</name>
        <dbReference type="ChEBI" id="CHEBI:29103"/>
    </ligand>
</feature>
<feature type="binding site" evidence="1">
    <location>
        <position position="251"/>
    </location>
    <ligand>
        <name>K(+)</name>
        <dbReference type="ChEBI" id="CHEBI:29103"/>
    </ligand>
</feature>
<feature type="binding site" evidence="1">
    <location>
        <position position="254"/>
    </location>
    <ligand>
        <name>K(+)</name>
        <dbReference type="ChEBI" id="CHEBI:29103"/>
    </ligand>
</feature>
<feature type="binding site" evidence="1">
    <location>
        <position position="255"/>
    </location>
    <ligand>
        <name>Mg(2+)</name>
        <dbReference type="ChEBI" id="CHEBI:18420"/>
    </ligand>
</feature>
<feature type="binding site" evidence="1">
    <location>
        <begin position="274"/>
        <end position="277"/>
    </location>
    <ligand>
        <name>GTP</name>
        <dbReference type="ChEBI" id="CHEBI:37565"/>
    </ligand>
</feature>
<feature type="binding site" evidence="1">
    <location>
        <position position="465"/>
    </location>
    <ligand>
        <name>(6S)-5-formyl-5,6,7,8-tetrahydrofolate</name>
        <dbReference type="ChEBI" id="CHEBI:57457"/>
    </ligand>
</feature>
<name>MNME_BACFN</name>
<evidence type="ECO:0000255" key="1">
    <source>
        <dbReference type="HAMAP-Rule" id="MF_00379"/>
    </source>
</evidence>